<proteinExistence type="predicted"/>
<accession>Q9JGT9</accession>
<reference key="1">
    <citation type="journal article" date="2000" name="Arch. Virol.">
        <title>Complete nucleotide sequence of Northern cereal mosaic virus and its genome organization.</title>
        <authorList>
            <person name="Tanno F."/>
            <person name="Nakatsu A."/>
            <person name="Toriyama S."/>
            <person name="Kojima M."/>
        </authorList>
    </citation>
    <scope>NUCLEOTIDE SEQUENCE [GENOMIC RNA]</scope>
</reference>
<gene>
    <name type="primary">3</name>
</gene>
<protein>
    <recommendedName>
        <fullName>Protein 3</fullName>
    </recommendedName>
</protein>
<keyword id="KW-1185">Reference proteome</keyword>
<feature type="chain" id="PRO_0000299213" description="Protein 3">
    <location>
        <begin position="1"/>
        <end position="172"/>
    </location>
</feature>
<organism>
    <name type="scientific">Northern cereal mosaic virus</name>
    <name type="common">NCMV</name>
    <dbReference type="NCBI Taxonomy" id="1985704"/>
    <lineage>
        <taxon>Viruses</taxon>
        <taxon>Riboviria</taxon>
        <taxon>Orthornavirae</taxon>
        <taxon>Negarnaviricota</taxon>
        <taxon>Haploviricotina</taxon>
        <taxon>Monjiviricetes</taxon>
        <taxon>Mononegavirales</taxon>
        <taxon>Rhabdoviridae</taxon>
        <taxon>Betarhabdovirinae</taxon>
        <taxon>Cytorhabdovirus</taxon>
    </lineage>
</organism>
<organismHost>
    <name type="scientific">Hordeum vulgare</name>
    <name type="common">Barley</name>
    <dbReference type="NCBI Taxonomy" id="4513"/>
</organismHost>
<name>VP3_NCMV</name>
<sequence>MSSKFGNQCGKTQKIYIRNELINPDIEFSVPNSIFSCIGPKYAYASLQSIVVKYTPVITERSTGSIGISVSDRRFSASEVVSNISLDTSSKANLMISGFSCCPLEEGCPYTITISTKLEGVNYGAAVGSLVVSPSFRLSNEPIPTTGITYQMIKLGDVQKTYQGVAITDEKK</sequence>
<dbReference type="EMBL" id="AB030277">
    <property type="protein sequence ID" value="BAA95346.1"/>
    <property type="molecule type" value="Genomic_RNA"/>
</dbReference>
<dbReference type="RefSeq" id="NP_057956.1">
    <property type="nucleotide sequence ID" value="NC_002251.1"/>
</dbReference>
<dbReference type="GeneID" id="1457718"/>
<dbReference type="KEGG" id="vg:1457718"/>
<dbReference type="OrthoDB" id="37348at10239"/>
<dbReference type="Proteomes" id="UP000007785">
    <property type="component" value="Genome"/>
</dbReference>